<dbReference type="EMBL" id="L77246">
    <property type="protein sequence ID" value="AAA96615.1"/>
    <property type="molecule type" value="Genomic_DNA"/>
</dbReference>
<dbReference type="EMBL" id="AL009126">
    <property type="protein sequence ID" value="CAB14120.1"/>
    <property type="molecule type" value="Genomic_DNA"/>
</dbReference>
<dbReference type="PIR" id="E69933">
    <property type="entry name" value="E69933"/>
</dbReference>
<dbReference type="RefSeq" id="NP_390085.1">
    <property type="nucleotide sequence ID" value="NC_000964.3"/>
</dbReference>
<dbReference type="RefSeq" id="WP_003230755.1">
    <property type="nucleotide sequence ID" value="NZ_OZ025638.1"/>
</dbReference>
<dbReference type="IntAct" id="P54159">
    <property type="interactions" value="1"/>
</dbReference>
<dbReference type="STRING" id="224308.BSU22030"/>
<dbReference type="PaxDb" id="224308-BSU22030"/>
<dbReference type="EnsemblBacteria" id="CAB14120">
    <property type="protein sequence ID" value="CAB14120"/>
    <property type="gene ID" value="BSU_22030"/>
</dbReference>
<dbReference type="GeneID" id="939071"/>
<dbReference type="KEGG" id="bsu:BSU22030"/>
<dbReference type="PATRIC" id="fig|224308.179.peg.2407"/>
<dbReference type="eggNOG" id="COG0699">
    <property type="taxonomic scope" value="Bacteria"/>
</dbReference>
<dbReference type="InParanoid" id="P54159"/>
<dbReference type="OrthoDB" id="5477114at2"/>
<dbReference type="PhylomeDB" id="P54159"/>
<dbReference type="BioCyc" id="BSUB:BSU22030-MONOMER"/>
<dbReference type="Proteomes" id="UP000001570">
    <property type="component" value="Chromosome"/>
</dbReference>
<dbReference type="GO" id="GO:0005886">
    <property type="term" value="C:plasma membrane"/>
    <property type="evidence" value="ECO:0007669"/>
    <property type="project" value="UniProtKB-SubCell"/>
</dbReference>
<dbReference type="GO" id="GO:0005525">
    <property type="term" value="F:GTP binding"/>
    <property type="evidence" value="ECO:0007669"/>
    <property type="project" value="UniProtKB-KW"/>
</dbReference>
<dbReference type="GO" id="GO:0003924">
    <property type="term" value="F:GTPase activity"/>
    <property type="evidence" value="ECO:0007669"/>
    <property type="project" value="InterPro"/>
</dbReference>
<dbReference type="GO" id="GO:0008289">
    <property type="term" value="F:lipid binding"/>
    <property type="evidence" value="ECO:0007669"/>
    <property type="project" value="UniProtKB-KW"/>
</dbReference>
<dbReference type="GO" id="GO:0090529">
    <property type="term" value="P:cell septum assembly"/>
    <property type="evidence" value="ECO:0000315"/>
    <property type="project" value="CACAO"/>
</dbReference>
<dbReference type="GO" id="GO:0008360">
    <property type="term" value="P:regulation of cell shape"/>
    <property type="evidence" value="ECO:0007669"/>
    <property type="project" value="UniProtKB-KW"/>
</dbReference>
<dbReference type="CDD" id="cd09912">
    <property type="entry name" value="DLP_2"/>
    <property type="match status" value="2"/>
</dbReference>
<dbReference type="FunFam" id="3.40.50.300:FF:003637">
    <property type="entry name" value="Uncharacterized protein YpbR"/>
    <property type="match status" value="1"/>
</dbReference>
<dbReference type="Gene3D" id="3.40.50.300">
    <property type="entry name" value="P-loop containing nucleotide triphosphate hydrolases"/>
    <property type="match status" value="2"/>
</dbReference>
<dbReference type="InterPro" id="IPR045063">
    <property type="entry name" value="Dynamin_N"/>
</dbReference>
<dbReference type="InterPro" id="IPR027094">
    <property type="entry name" value="Mitofusin_fam"/>
</dbReference>
<dbReference type="InterPro" id="IPR027417">
    <property type="entry name" value="P-loop_NTPase"/>
</dbReference>
<dbReference type="PANTHER" id="PTHR10465:SF0">
    <property type="entry name" value="SARCALUMENIN"/>
    <property type="match status" value="1"/>
</dbReference>
<dbReference type="PANTHER" id="PTHR10465">
    <property type="entry name" value="TRANSMEMBRANE GTPASE FZO1"/>
    <property type="match status" value="1"/>
</dbReference>
<dbReference type="Pfam" id="PF00350">
    <property type="entry name" value="Dynamin_N"/>
    <property type="match status" value="2"/>
</dbReference>
<dbReference type="SUPFAM" id="SSF52540">
    <property type="entry name" value="P-loop containing nucleoside triphosphate hydrolases"/>
    <property type="match status" value="2"/>
</dbReference>
<protein>
    <recommendedName>
        <fullName evidence="8">Dynamin-like protein A</fullName>
        <shortName evidence="8">DynA</shortName>
    </recommendedName>
</protein>
<gene>
    <name evidence="8" type="primary">dynA</name>
    <name type="synonym">ypbR</name>
    <name type="ordered locus">BSU22030</name>
</gene>
<reference key="1">
    <citation type="journal article" date="1996" name="Microbiology">
        <title>Organization of the Bacillus subtilis 168 chromosome between kdg and the attachment site of the SP beta prophage: use of long accurate PCR and yeast artificial chromosomes for sequencing.</title>
        <authorList>
            <person name="Capuano V."/>
            <person name="Galleron N."/>
            <person name="Pujic P."/>
            <person name="Sorokin A."/>
            <person name="Ehrlich S.D."/>
        </authorList>
    </citation>
    <scope>NUCLEOTIDE SEQUENCE [GENOMIC DNA]</scope>
    <source>
        <strain>168 / Marburg / ATCC 6051 / DSM 10 / JCM 1465 / NBRC 13719 / NCIMB 3610 / NRRL NRS-744 / VKM B-501</strain>
    </source>
</reference>
<reference key="2">
    <citation type="journal article" date="1997" name="Nature">
        <title>The complete genome sequence of the Gram-positive bacterium Bacillus subtilis.</title>
        <authorList>
            <person name="Kunst F."/>
            <person name="Ogasawara N."/>
            <person name="Moszer I."/>
            <person name="Albertini A.M."/>
            <person name="Alloni G."/>
            <person name="Azevedo V."/>
            <person name="Bertero M.G."/>
            <person name="Bessieres P."/>
            <person name="Bolotin A."/>
            <person name="Borchert S."/>
            <person name="Borriss R."/>
            <person name="Boursier L."/>
            <person name="Brans A."/>
            <person name="Braun M."/>
            <person name="Brignell S.C."/>
            <person name="Bron S."/>
            <person name="Brouillet S."/>
            <person name="Bruschi C.V."/>
            <person name="Caldwell B."/>
            <person name="Capuano V."/>
            <person name="Carter N.M."/>
            <person name="Choi S.-K."/>
            <person name="Codani J.-J."/>
            <person name="Connerton I.F."/>
            <person name="Cummings N.J."/>
            <person name="Daniel R.A."/>
            <person name="Denizot F."/>
            <person name="Devine K.M."/>
            <person name="Duesterhoeft A."/>
            <person name="Ehrlich S.D."/>
            <person name="Emmerson P.T."/>
            <person name="Entian K.-D."/>
            <person name="Errington J."/>
            <person name="Fabret C."/>
            <person name="Ferrari E."/>
            <person name="Foulger D."/>
            <person name="Fritz C."/>
            <person name="Fujita M."/>
            <person name="Fujita Y."/>
            <person name="Fuma S."/>
            <person name="Galizzi A."/>
            <person name="Galleron N."/>
            <person name="Ghim S.-Y."/>
            <person name="Glaser P."/>
            <person name="Goffeau A."/>
            <person name="Golightly E.J."/>
            <person name="Grandi G."/>
            <person name="Guiseppi G."/>
            <person name="Guy B.J."/>
            <person name="Haga K."/>
            <person name="Haiech J."/>
            <person name="Harwood C.R."/>
            <person name="Henaut A."/>
            <person name="Hilbert H."/>
            <person name="Holsappel S."/>
            <person name="Hosono S."/>
            <person name="Hullo M.-F."/>
            <person name="Itaya M."/>
            <person name="Jones L.-M."/>
            <person name="Joris B."/>
            <person name="Karamata D."/>
            <person name="Kasahara Y."/>
            <person name="Klaerr-Blanchard M."/>
            <person name="Klein C."/>
            <person name="Kobayashi Y."/>
            <person name="Koetter P."/>
            <person name="Koningstein G."/>
            <person name="Krogh S."/>
            <person name="Kumano M."/>
            <person name="Kurita K."/>
            <person name="Lapidus A."/>
            <person name="Lardinois S."/>
            <person name="Lauber J."/>
            <person name="Lazarevic V."/>
            <person name="Lee S.-M."/>
            <person name="Levine A."/>
            <person name="Liu H."/>
            <person name="Masuda S."/>
            <person name="Mauel C."/>
            <person name="Medigue C."/>
            <person name="Medina N."/>
            <person name="Mellado R.P."/>
            <person name="Mizuno M."/>
            <person name="Moestl D."/>
            <person name="Nakai S."/>
            <person name="Noback M."/>
            <person name="Noone D."/>
            <person name="O'Reilly M."/>
            <person name="Ogawa K."/>
            <person name="Ogiwara A."/>
            <person name="Oudega B."/>
            <person name="Park S.-H."/>
            <person name="Parro V."/>
            <person name="Pohl T.M."/>
            <person name="Portetelle D."/>
            <person name="Porwollik S."/>
            <person name="Prescott A.M."/>
            <person name="Presecan E."/>
            <person name="Pujic P."/>
            <person name="Purnelle B."/>
            <person name="Rapoport G."/>
            <person name="Rey M."/>
            <person name="Reynolds S."/>
            <person name="Rieger M."/>
            <person name="Rivolta C."/>
            <person name="Rocha E."/>
            <person name="Roche B."/>
            <person name="Rose M."/>
            <person name="Sadaie Y."/>
            <person name="Sato T."/>
            <person name="Scanlan E."/>
            <person name="Schleich S."/>
            <person name="Schroeter R."/>
            <person name="Scoffone F."/>
            <person name="Sekiguchi J."/>
            <person name="Sekowska A."/>
            <person name="Seror S.J."/>
            <person name="Serror P."/>
            <person name="Shin B.-S."/>
            <person name="Soldo B."/>
            <person name="Sorokin A."/>
            <person name="Tacconi E."/>
            <person name="Takagi T."/>
            <person name="Takahashi H."/>
            <person name="Takemaru K."/>
            <person name="Takeuchi M."/>
            <person name="Tamakoshi A."/>
            <person name="Tanaka T."/>
            <person name="Terpstra P."/>
            <person name="Tognoni A."/>
            <person name="Tosato V."/>
            <person name="Uchiyama S."/>
            <person name="Vandenbol M."/>
            <person name="Vannier F."/>
            <person name="Vassarotti A."/>
            <person name="Viari A."/>
            <person name="Wambutt R."/>
            <person name="Wedler E."/>
            <person name="Wedler H."/>
            <person name="Weitzenegger T."/>
            <person name="Winters P."/>
            <person name="Wipat A."/>
            <person name="Yamamoto H."/>
            <person name="Yamane K."/>
            <person name="Yasumoto K."/>
            <person name="Yata K."/>
            <person name="Yoshida K."/>
            <person name="Yoshikawa H.-F."/>
            <person name="Zumstein E."/>
            <person name="Yoshikawa H."/>
            <person name="Danchin A."/>
        </authorList>
    </citation>
    <scope>NUCLEOTIDE SEQUENCE [LARGE SCALE GENOMIC DNA]</scope>
    <source>
        <strain>168</strain>
    </source>
</reference>
<reference key="3">
    <citation type="journal article" date="2011" name="Mol. Microbiol.">
        <title>A bacterial dynamin-like protein mediating nucleotide-independent membrane fusion.</title>
        <authorList>
            <person name="Buermann F."/>
            <person name="Ebert N."/>
            <person name="van Baarle S."/>
            <person name="Bramkamp M."/>
        </authorList>
    </citation>
    <scope>FUNCTION</scope>
    <scope>CATALYTIC ACTIVITY</scope>
    <scope>COFACTOR</scope>
    <scope>SUBUNIT</scope>
    <scope>SUBCELLULAR LOCATION</scope>
    <scope>DOMAIN</scope>
    <scope>DISRUPTION PHENOTYPE</scope>
    <scope>MUTAGENESIS OF LYS-65 AND LYS-625</scope>
    <source>
        <strain>168</strain>
    </source>
</reference>
<reference key="4">
    <citation type="journal article" date="2012" name="Commun. Integr. Biol.">
        <title>Identification of interaction partners of the dynamin-like protein DynA from Bacillus subtilis.</title>
        <authorList>
            <person name="Buermann F."/>
            <person name="Sawant P."/>
            <person name="Bramkamp M."/>
        </authorList>
    </citation>
    <scope>INTERACTION WITH RNY; YNEK AND YWPG</scope>
    <scope>SUBUNIT</scope>
    <scope>SUBCELLULAR LOCATION</scope>
    <source>
        <strain>168</strain>
    </source>
</reference>
<reference key="5">
    <citation type="journal article" date="2012" name="BMC Microbiol.">
        <title>The deletion of bacterial dynamin and flotillin genes results in pleiotrophic effects on cell division, cell growth and in cell shape maintenance.</title>
        <authorList>
            <person name="Dempwolff F."/>
            <person name="Wischhusen H.M."/>
            <person name="Specht M."/>
            <person name="Graumann P.L."/>
        </authorList>
    </citation>
    <scope>FUNCTION</scope>
    <scope>SUBCELLULAR LOCATION</scope>
    <scope>DISRUPTION PHENOTYPE</scope>
    <source>
        <strain>168 / PY79</strain>
    </source>
</reference>
<reference key="6">
    <citation type="journal article" date="2014" name="Commun. Integr. Biol.">
        <title>Genetic links between bacterial dynamin and flotillin proteins.</title>
        <authorList>
            <person name="Dempwolff F."/>
            <person name="Graumann P.L."/>
        </authorList>
    </citation>
    <scope>DISRUPTION PHENOTYPE</scope>
    <source>
        <strain>168 / PY79</strain>
    </source>
</reference>
<reference key="7">
    <citation type="journal article" date="2015" name="PLoS ONE">
        <title>Dissecting the molecular properties of prokaryotic flotillins.</title>
        <authorList>
            <person name="Bach J.N."/>
            <person name="Bramkamp M."/>
        </authorList>
    </citation>
    <scope>LIPID-BINDING</scope>
    <source>
        <strain>168</strain>
    </source>
</reference>
<reference key="8">
    <citation type="journal article" date="2016" name="Environ. Microbiol.">
        <title>A dynamin-like protein involved in bacterial cell membrane surveillance under environmental stress.</title>
        <authorList>
            <person name="Sawant P."/>
            <person name="Eissenberger K."/>
            <person name="Karier L."/>
            <person name="Mascher T."/>
            <person name="Bramkamp M."/>
        </authorList>
    </citation>
    <scope>FUNCTION</scope>
    <scope>SUBUNIT</scope>
    <scope>SUBCELLULAR LOCATION</scope>
    <scope>DISRUPTION PHENOTYPE</scope>
    <source>
        <strain>168 / PSB025 / 25152</strain>
    </source>
</reference>
<reference key="9">
    <citation type="journal article" date="2019" name="FASEB J.">
        <title>Bacterial dynamin-like protein DynA mediates lipid and content mixing.</title>
        <authorList>
            <person name="Guo L."/>
            <person name="Bramkamp M."/>
        </authorList>
    </citation>
    <scope>FUNCTION</scope>
    <scope>DOMAIN</scope>
    <scope>MUTAGENESIS OF LYS-56 AND LYS-625</scope>
    <source>
        <strain>168</strain>
    </source>
</reference>
<organism>
    <name type="scientific">Bacillus subtilis (strain 168)</name>
    <dbReference type="NCBI Taxonomy" id="224308"/>
    <lineage>
        <taxon>Bacteria</taxon>
        <taxon>Bacillati</taxon>
        <taxon>Bacillota</taxon>
        <taxon>Bacilli</taxon>
        <taxon>Bacillales</taxon>
        <taxon>Bacillaceae</taxon>
        <taxon>Bacillus</taxon>
    </lineage>
</organism>
<proteinExistence type="evidence at protein level"/>
<name>DYNA_BACSU</name>
<accession>P54159</accession>
<sequence>MTDQNRKELLHKTGELYKQFIENQDEQRAAKLAAVMKKAADEEVYIAFTGHYSAGKSSLLNCLLMENILPTSPIPTSANLVVIRNGEKRVRLHTTDGACAELEGTYQKDKVQQYCKDGEQIESVEIFDRYTEIDSGVAYIDTPGIDSTDDAHFLSAASILHQADALFYVVHYNHVHAEENVKFLRSIKESIPNVYFIVNQIDRHDETETKFGDYQAQVEEMLCNEGISREALYFTSVTEPDHPFNQMGALREELSRIEQQSKSNMQALTEQKVRNLLKEHTEMLKKDETGAPSFAEQLNIHTGLVQSLRDQLDEAEKQMTEAEKRMQEEINRILKNANLTPFEMRELAAAFLESQEPSFKTGFFFSKAKTAQERDKRRNAFFSDVAKRTEAEADWHMIDTLHKLAKVFDVYTAESEKLIQAYRTPLDISIIEHAVKHGAAFSSEYVLQYTKDLAELIRKEAKREAADIIKVLSAMVKERVSKDVQTINDRLVQESEKLVFLQEQARLENNAREKTDRLWAIWEEESACPMHIDTEWFKSKKTRVAAPEQKQGRSQLTAQPMPKSEIKMEQEMPLQDQIKRFYTLSDILGECSMLLKQTSAFRERVKRLEERKFTLALFGGFSSGKSSFANALVGERVLPSSPTPTTATINKITKPINGNLNKTANVVFKTEDDLTAEILQLTGIPKEPAGRSFTEKWEKAVKKNRLQEEHVKLISNFLLAYEKYQQYIQEQKKLTIPLSELKPYVAEETTACAVKEVTVYYTCPLTEKGITIVDTPGASSMNKRHTELAFQYIKDADAFFYMTYYQHSFSKGDRSFLRKLGLVKESLSMDKMFFIINAADLAKDKTELETVTDYVSAELVKEGVYEPQLFTVSSKEELVGKPESFYNQFSKVRKHLDRFIEVDVKKASAAQLSSEADKLCETVFQLHQSQHQSREEKEAQKQCLMLSFERTAADIEKRRNSKTIIEKVKKDTREQLYHIAQRLSYFANDLLKSAFHPGLQNGDWKKNVSKAMTTALHEYLFEYIQEIKTLDVRMSGFIERHINEEWLDHFQKTLNEDGYFSVYAGDQHSNGIQLKEVEPEIEERAFEQELKEIKSPKQFFEQKGKATFIEAVRMKLTKITEAWIKNEEESLISHYTAHLRRLQEDMGEKAIAQITDQKETYLRGYAEGEHAKEIEMAYQACISWKNSDNTIKM</sequence>
<keyword id="KW-0131">Cell cycle</keyword>
<keyword id="KW-0132">Cell division</keyword>
<keyword id="KW-1003">Cell membrane</keyword>
<keyword id="KW-0133">Cell shape</keyword>
<keyword id="KW-0342">GTP-binding</keyword>
<keyword id="KW-0378">Hydrolase</keyword>
<keyword id="KW-0446">Lipid-binding</keyword>
<keyword id="KW-0472">Membrane</keyword>
<keyword id="KW-0547">Nucleotide-binding</keyword>
<keyword id="KW-1185">Reference proteome</keyword>
<keyword id="KW-0677">Repeat</keyword>
<evidence type="ECO:0000255" key="1">
    <source>
        <dbReference type="PROSITE-ProRule" id="PRU01055"/>
    </source>
</evidence>
<evidence type="ECO:0000269" key="2">
    <source>
    </source>
</evidence>
<evidence type="ECO:0000269" key="3">
    <source>
    </source>
</evidence>
<evidence type="ECO:0000269" key="4">
    <source>
    </source>
</evidence>
<evidence type="ECO:0000269" key="5">
    <source>
    </source>
</evidence>
<evidence type="ECO:0000269" key="6">
    <source>
    </source>
</evidence>
<evidence type="ECO:0000269" key="7">
    <source>
    </source>
</evidence>
<evidence type="ECO:0000303" key="8">
    <source>
    </source>
</evidence>
<evidence type="ECO:0000305" key="9"/>
<evidence type="ECO:0000305" key="10">
    <source>
    </source>
</evidence>
<evidence type="ECO:0000305" key="11">
    <source>
    </source>
</evidence>
<comment type="function">
    <text evidence="2 4 5 7">Mediates lipid mixing of vesicles and full mixing of their contents in the absence and presence of GTP. Tethers and mixes small vesicles better than larger ones, indicating a curvature preference. GTP slows down DynA-mediated lipid fusion, perhaps controlling its activity. Prefers phospholipid composition close to the B.subtilis membrane; requires phosphatidylglycerol for fusion has no activity on pure phosphatidylethanolamine vesicles (PubMed:31361971). Regulates membrane lipid diffusion. Required to prevent membrane damage when exposed to low levels of membrane-damaging antibiotics or to bacteriophage. Probably surveys the cell membrane for stress; localizes to sites of membrane damage (treatment with nisin) and forms foci in cells treated with pore-forming compounds (CCCP). May assist membrane repair, possibly by membrane tethering and fusion (PubMed:26530236). Probably functions both in early and late cell division, affects the proper formation of the FtsZ ring. Plays a non-redundant role with flottilin (floT) in membrane dynamics and cell shape. Probably able to bend membranes (PubMed:23249255). Tethers liposomes and mediates their fusion; this does not require GTPase activity or the presence of GTP. Both GTPase domains (dynamin-type G) are required for GTPase activity (PubMed:21205012).</text>
</comment>
<comment type="function">
    <text evidence="4">Has intrinsic affinity for membranes and membrane distortion capability; causes tubulation and membrane distortion when expressed in a Drosophila cell line.</text>
</comment>
<comment type="catalytic activity">
    <reaction evidence="2">
        <text>GTP + H2O = GDP + phosphate + H(+)</text>
        <dbReference type="Rhea" id="RHEA:19669"/>
        <dbReference type="ChEBI" id="CHEBI:15377"/>
        <dbReference type="ChEBI" id="CHEBI:15378"/>
        <dbReference type="ChEBI" id="CHEBI:37565"/>
        <dbReference type="ChEBI" id="CHEBI:43474"/>
        <dbReference type="ChEBI" id="CHEBI:58189"/>
    </reaction>
</comment>
<comment type="cofactor">
    <cofactor evidence="2">
        <name>Mg(2+)</name>
        <dbReference type="ChEBI" id="CHEBI:18420"/>
    </cofactor>
    <text evidence="2">Requires Mg(2+) for membrane fusion.</text>
</comment>
<comment type="subunit">
    <text evidence="3 10 11">Homodimer in solution (Probable). Both D1 and D2 domains interact with YwpG, YneK interacts only with D1 while RNase Y (rny) only interacts with whole protein (PubMed:23060960). Probably oligomerizes at damaged membrane sites (Probable).</text>
</comment>
<comment type="subcellular location">
    <subcellularLocation>
        <location evidence="2 3 11">Cell membrane</location>
        <topology evidence="9">Peripheral membrane protein</topology>
    </subcellularLocation>
    <text evidence="2 3 4 5">Found at the division septum; in the absence of minJ dispersed along membrane. Associates with the cell membrane via the D1 domain, D2 does not associate with membranes (PubMed:21205012, PubMed:23060960). In growing cells forms foci at midcell, colocalizes with FtsZ. Membrane localized in non-growing cells (PubMed:23249255). Localized uniformly along cell membrane where it is highly dynamic, DynA localizes to regions of membrane deformation upon nisin treatment and remains at those sites. Localizes into foci upon membrane potential dissipation (CCCP treatment, forms membrane pores) (PubMed:26530236).</text>
</comment>
<comment type="domain">
    <text evidence="2 7">Has 2 similar domains, D1 (approximately residues 1-600) and D2 (approximately residues 601-1193). D1 is able to bind membranes, tether liposomes and cause membrane fusion in the absence of D2; both regions are required for GTPase activity. Possibly the fusion of 2 dynamin-like genes (PubMed:21205012). D1 alone promotes membrane tethering but requires D2 for stable tethering and content mixing (PubMed:31361971).</text>
</comment>
<comment type="disruption phenotype">
    <text evidence="2 4 5 6">No visible phenotype (PubMed:21205012). 5% of cells have a double septa, 2% of cells are very long. Double dynA-ezrA mutants have longer cells with more double septa than either deletion alone. Double dynA-floT deletions are highly elongated, filamentous and have strong defects in cell shape; cells grow very slowly with an extended lag phase. Double dynA-mreB deletions have strong cell shape defects (PubMed:23249255). Double dynA-floT deletions are less motile than single floT deletions (PubMed:26842743). Increased lipid mobility in the cell membrane. Severe decrease in growth on nisin (causes membrane pore formation) with significant membrane deformation and damage, intermediate decrease in growth on antibiotics acting on lipid II or the membrane (bacitracin and daptomycin). No effect on growth on vancomycin (blocks peptidoglycan cross-links) or gramicidin D (makes small pores). 20-50% increased susceptibility to phage phi29 and SPbeta (PubMed:26530236).</text>
</comment>
<comment type="miscellaneous">
    <text evidence="5">Strain PSB025 / 25152 does not have the SP-beta prophage.</text>
</comment>
<comment type="similarity">
    <text evidence="9">Belongs to the TRAFAC class dynamin-like GTPase superfamily. Dynamin/Fzo/YdjA family.</text>
</comment>
<feature type="chain" id="PRO_0000049682" description="Dynamin-like protein A">
    <location>
        <begin position="1"/>
        <end position="1193"/>
    </location>
</feature>
<feature type="region of interest" description="D1, associates with and fuses membranes, tethers lipsomes" evidence="10">
    <location>
        <begin position="1"/>
        <end position="609"/>
    </location>
</feature>
<feature type="region of interest" description="G1 motif D1" evidence="1 9">
    <location>
        <begin position="50"/>
        <end position="57"/>
    </location>
</feature>
<feature type="region of interest" description="G2 motif D1" evidence="1 9">
    <location>
        <begin position="76"/>
        <end position="78"/>
    </location>
</feature>
<feature type="region of interest" description="G3 motif D1" evidence="1 9">
    <location>
        <begin position="141"/>
        <end position="144"/>
    </location>
</feature>
<feature type="region of interest" description="G4 motif D1" evidence="1 9">
    <location>
        <begin position="199"/>
        <end position="202"/>
    </location>
</feature>
<feature type="region of interest" description="D2, does not associate with membranes" evidence="10">
    <location>
        <begin position="561"/>
        <end position="1193"/>
    </location>
</feature>
<feature type="region of interest" description="G1 motif D2" evidence="9">
    <location>
        <begin position="619"/>
        <end position="626"/>
    </location>
</feature>
<feature type="region of interest" description="G2 motif D2" evidence="9">
    <location>
        <begin position="645"/>
        <end position="647"/>
    </location>
</feature>
<feature type="region of interest" description="G3 motif D2" evidence="9">
    <location>
        <begin position="774"/>
        <end position="777"/>
    </location>
</feature>
<feature type="region of interest" description="G4 motif D2" evidence="9">
    <location>
        <begin position="837"/>
        <end position="840"/>
    </location>
</feature>
<feature type="mutagenesis site" description="No change in membrane fusion. Still binds GTP, no GTPase activity. No longer binds GTP, no GTPase activity; when associated with A-56. Double mutant causes better vesicle and content mixing than wild-type." evidence="2 7">
    <original>K</original>
    <variation>A</variation>
    <location>
        <position position="56"/>
    </location>
</feature>
<feature type="mutagenesis site" description="No change in membrane fusion. Still binds GTP, no GTPase activity. No longer binds GTP, no GTPase activity; when associated with A-625. Double mutant causes better vesicle and content mixing than wild-type." evidence="2 7">
    <original>K</original>
    <variation>A</variation>
    <location>
        <position position="625"/>
    </location>
</feature>